<evidence type="ECO:0000250" key="1"/>
<evidence type="ECO:0000250" key="2">
    <source>
        <dbReference type="UniProtKB" id="P04746"/>
    </source>
</evidence>
<evidence type="ECO:0000250" key="3">
    <source>
        <dbReference type="UniProtKB" id="P56634"/>
    </source>
</evidence>
<evidence type="ECO:0000255" key="4"/>
<evidence type="ECO:0000305" key="5"/>
<name>AMYR_DROME</name>
<accession>O18408</accession>
<accession>Q9V7S3</accession>
<protein>
    <recommendedName>
        <fullName>Alpha-amylase-related protein</fullName>
        <ecNumber evidence="2">3.2.1.1</ecNumber>
    </recommendedName>
</protein>
<reference key="1">
    <citation type="journal article" date="1998" name="Proc. Natl. Acad. Sci. U.S.A.">
        <title>Amyrel, a paralogous gene of the amylase gene family in Drosophila melanogaster and the Sophophora subgenus.</title>
        <authorList>
            <person name="Da Lage J.-L."/>
            <person name="Renard E."/>
            <person name="Chartois F."/>
            <person name="Lemeunier F."/>
            <person name="Cariou M.-L."/>
        </authorList>
    </citation>
    <scope>NUCLEOTIDE SEQUENCE [GENOMIC DNA]</scope>
    <source>
        <strain>Canton-S</strain>
    </source>
</reference>
<reference key="2">
    <citation type="submission" date="1999-01" db="EMBL/GenBank/DDBJ databases">
        <authorList>
            <person name="Da Lage J.-L."/>
        </authorList>
    </citation>
    <scope>SEQUENCE REVISION AT 310</scope>
</reference>
<reference key="3">
    <citation type="submission" date="2000-02" db="EMBL/GenBank/DDBJ databases">
        <authorList>
            <person name="Da Lage J.-L."/>
        </authorList>
    </citation>
    <scope>NUCLEOTIDE SEQUENCE [GENOMIC DNA]</scope>
    <source>
        <strain>Canton-S</strain>
    </source>
</reference>
<reference key="4">
    <citation type="journal article" date="2000" name="Science">
        <title>The genome sequence of Drosophila melanogaster.</title>
        <authorList>
            <person name="Adams M.D."/>
            <person name="Celniker S.E."/>
            <person name="Holt R.A."/>
            <person name="Evans C.A."/>
            <person name="Gocayne J.D."/>
            <person name="Amanatides P.G."/>
            <person name="Scherer S.E."/>
            <person name="Li P.W."/>
            <person name="Hoskins R.A."/>
            <person name="Galle R.F."/>
            <person name="George R.A."/>
            <person name="Lewis S.E."/>
            <person name="Richards S."/>
            <person name="Ashburner M."/>
            <person name="Henderson S.N."/>
            <person name="Sutton G.G."/>
            <person name="Wortman J.R."/>
            <person name="Yandell M.D."/>
            <person name="Zhang Q."/>
            <person name="Chen L.X."/>
            <person name="Brandon R.C."/>
            <person name="Rogers Y.-H.C."/>
            <person name="Blazej R.G."/>
            <person name="Champe M."/>
            <person name="Pfeiffer B.D."/>
            <person name="Wan K.H."/>
            <person name="Doyle C."/>
            <person name="Baxter E.G."/>
            <person name="Helt G."/>
            <person name="Nelson C.R."/>
            <person name="Miklos G.L.G."/>
            <person name="Abril J.F."/>
            <person name="Agbayani A."/>
            <person name="An H.-J."/>
            <person name="Andrews-Pfannkoch C."/>
            <person name="Baldwin D."/>
            <person name="Ballew R.M."/>
            <person name="Basu A."/>
            <person name="Baxendale J."/>
            <person name="Bayraktaroglu L."/>
            <person name="Beasley E.M."/>
            <person name="Beeson K.Y."/>
            <person name="Benos P.V."/>
            <person name="Berman B.P."/>
            <person name="Bhandari D."/>
            <person name="Bolshakov S."/>
            <person name="Borkova D."/>
            <person name="Botchan M.R."/>
            <person name="Bouck J."/>
            <person name="Brokstein P."/>
            <person name="Brottier P."/>
            <person name="Burtis K.C."/>
            <person name="Busam D.A."/>
            <person name="Butler H."/>
            <person name="Cadieu E."/>
            <person name="Center A."/>
            <person name="Chandra I."/>
            <person name="Cherry J.M."/>
            <person name="Cawley S."/>
            <person name="Dahlke C."/>
            <person name="Davenport L.B."/>
            <person name="Davies P."/>
            <person name="de Pablos B."/>
            <person name="Delcher A."/>
            <person name="Deng Z."/>
            <person name="Mays A.D."/>
            <person name="Dew I."/>
            <person name="Dietz S.M."/>
            <person name="Dodson K."/>
            <person name="Doup L.E."/>
            <person name="Downes M."/>
            <person name="Dugan-Rocha S."/>
            <person name="Dunkov B.C."/>
            <person name="Dunn P."/>
            <person name="Durbin K.J."/>
            <person name="Evangelista C.C."/>
            <person name="Ferraz C."/>
            <person name="Ferriera S."/>
            <person name="Fleischmann W."/>
            <person name="Fosler C."/>
            <person name="Gabrielian A.E."/>
            <person name="Garg N.S."/>
            <person name="Gelbart W.M."/>
            <person name="Glasser K."/>
            <person name="Glodek A."/>
            <person name="Gong F."/>
            <person name="Gorrell J.H."/>
            <person name="Gu Z."/>
            <person name="Guan P."/>
            <person name="Harris M."/>
            <person name="Harris N.L."/>
            <person name="Harvey D.A."/>
            <person name="Heiman T.J."/>
            <person name="Hernandez J.R."/>
            <person name="Houck J."/>
            <person name="Hostin D."/>
            <person name="Houston K.A."/>
            <person name="Howland T.J."/>
            <person name="Wei M.-H."/>
            <person name="Ibegwam C."/>
            <person name="Jalali M."/>
            <person name="Kalush F."/>
            <person name="Karpen G.H."/>
            <person name="Ke Z."/>
            <person name="Kennison J.A."/>
            <person name="Ketchum K.A."/>
            <person name="Kimmel B.E."/>
            <person name="Kodira C.D."/>
            <person name="Kraft C.L."/>
            <person name="Kravitz S."/>
            <person name="Kulp D."/>
            <person name="Lai Z."/>
            <person name="Lasko P."/>
            <person name="Lei Y."/>
            <person name="Levitsky A.A."/>
            <person name="Li J.H."/>
            <person name="Li Z."/>
            <person name="Liang Y."/>
            <person name="Lin X."/>
            <person name="Liu X."/>
            <person name="Mattei B."/>
            <person name="McIntosh T.C."/>
            <person name="McLeod M.P."/>
            <person name="McPherson D."/>
            <person name="Merkulov G."/>
            <person name="Milshina N.V."/>
            <person name="Mobarry C."/>
            <person name="Morris J."/>
            <person name="Moshrefi A."/>
            <person name="Mount S.M."/>
            <person name="Moy M."/>
            <person name="Murphy B."/>
            <person name="Murphy L."/>
            <person name="Muzny D.M."/>
            <person name="Nelson D.L."/>
            <person name="Nelson D.R."/>
            <person name="Nelson K.A."/>
            <person name="Nixon K."/>
            <person name="Nusskern D.R."/>
            <person name="Pacleb J.M."/>
            <person name="Palazzolo M."/>
            <person name="Pittman G.S."/>
            <person name="Pan S."/>
            <person name="Pollard J."/>
            <person name="Puri V."/>
            <person name="Reese M.G."/>
            <person name="Reinert K."/>
            <person name="Remington K."/>
            <person name="Saunders R.D.C."/>
            <person name="Scheeler F."/>
            <person name="Shen H."/>
            <person name="Shue B.C."/>
            <person name="Siden-Kiamos I."/>
            <person name="Simpson M."/>
            <person name="Skupski M.P."/>
            <person name="Smith T.J."/>
            <person name="Spier E."/>
            <person name="Spradling A.C."/>
            <person name="Stapleton M."/>
            <person name="Strong R."/>
            <person name="Sun E."/>
            <person name="Svirskas R."/>
            <person name="Tector C."/>
            <person name="Turner R."/>
            <person name="Venter E."/>
            <person name="Wang A.H."/>
            <person name="Wang X."/>
            <person name="Wang Z.-Y."/>
            <person name="Wassarman D.A."/>
            <person name="Weinstock G.M."/>
            <person name="Weissenbach J."/>
            <person name="Williams S.M."/>
            <person name="Woodage T."/>
            <person name="Worley K.C."/>
            <person name="Wu D."/>
            <person name="Yang S."/>
            <person name="Yao Q.A."/>
            <person name="Ye J."/>
            <person name="Yeh R.-F."/>
            <person name="Zaveri J.S."/>
            <person name="Zhan M."/>
            <person name="Zhang G."/>
            <person name="Zhao Q."/>
            <person name="Zheng L."/>
            <person name="Zheng X.H."/>
            <person name="Zhong F.N."/>
            <person name="Zhong W."/>
            <person name="Zhou X."/>
            <person name="Zhu S.C."/>
            <person name="Zhu X."/>
            <person name="Smith H.O."/>
            <person name="Gibbs R.A."/>
            <person name="Myers E.W."/>
            <person name="Rubin G.M."/>
            <person name="Venter J.C."/>
        </authorList>
    </citation>
    <scope>NUCLEOTIDE SEQUENCE [LARGE SCALE GENOMIC DNA]</scope>
    <source>
        <strain>Berkeley</strain>
    </source>
</reference>
<reference key="5">
    <citation type="journal article" date="2002" name="Genome Biol.">
        <title>Annotation of the Drosophila melanogaster euchromatic genome: a systematic review.</title>
        <authorList>
            <person name="Misra S."/>
            <person name="Crosby M.A."/>
            <person name="Mungall C.J."/>
            <person name="Matthews B.B."/>
            <person name="Campbell K.S."/>
            <person name="Hradecky P."/>
            <person name="Huang Y."/>
            <person name="Kaminker J.S."/>
            <person name="Millburn G.H."/>
            <person name="Prochnik S.E."/>
            <person name="Smith C.D."/>
            <person name="Tupy J.L."/>
            <person name="Whitfield E.J."/>
            <person name="Bayraktaroglu L."/>
            <person name="Berman B.P."/>
            <person name="Bettencourt B.R."/>
            <person name="Celniker S.E."/>
            <person name="de Grey A.D.N.J."/>
            <person name="Drysdale R.A."/>
            <person name="Harris N.L."/>
            <person name="Richter J."/>
            <person name="Russo S."/>
            <person name="Schroeder A.J."/>
            <person name="Shu S.Q."/>
            <person name="Stapleton M."/>
            <person name="Yamada C."/>
            <person name="Ashburner M."/>
            <person name="Gelbart W.M."/>
            <person name="Rubin G.M."/>
            <person name="Lewis S.E."/>
        </authorList>
    </citation>
    <scope>GENOME REANNOTATION</scope>
    <source>
        <strain>Berkeley</strain>
    </source>
</reference>
<reference key="6">
    <citation type="journal article" date="2002" name="Genome Biol.">
        <title>A Drosophila full-length cDNA resource.</title>
        <authorList>
            <person name="Stapleton M."/>
            <person name="Carlson J.W."/>
            <person name="Brokstein P."/>
            <person name="Yu C."/>
            <person name="Champe M."/>
            <person name="George R.A."/>
            <person name="Guarin H."/>
            <person name="Kronmiller B."/>
            <person name="Pacleb J.M."/>
            <person name="Park S."/>
            <person name="Wan K.H."/>
            <person name="Rubin G.M."/>
            <person name="Celniker S.E."/>
        </authorList>
    </citation>
    <scope>NUCLEOTIDE SEQUENCE [LARGE SCALE MRNA]</scope>
    <source>
        <strain>Berkeley</strain>
        <tissue>Larva</tissue>
        <tissue>Pupae</tissue>
    </source>
</reference>
<keyword id="KW-0106">Calcium</keyword>
<keyword id="KW-0119">Carbohydrate metabolism</keyword>
<keyword id="KW-0868">Chloride</keyword>
<keyword id="KW-1015">Disulfide bond</keyword>
<keyword id="KW-0326">Glycosidase</keyword>
<keyword id="KW-0378">Hydrolase</keyword>
<keyword id="KW-0479">Metal-binding</keyword>
<keyword id="KW-0873">Pyrrolidone carboxylic acid</keyword>
<keyword id="KW-1185">Reference proteome</keyword>
<keyword id="KW-0964">Secreted</keyword>
<keyword id="KW-0732">Signal</keyword>
<proteinExistence type="evidence at transcript level"/>
<organism>
    <name type="scientific">Drosophila melanogaster</name>
    <name type="common">Fruit fly</name>
    <dbReference type="NCBI Taxonomy" id="7227"/>
    <lineage>
        <taxon>Eukaryota</taxon>
        <taxon>Metazoa</taxon>
        <taxon>Ecdysozoa</taxon>
        <taxon>Arthropoda</taxon>
        <taxon>Hexapoda</taxon>
        <taxon>Insecta</taxon>
        <taxon>Pterygota</taxon>
        <taxon>Neoptera</taxon>
        <taxon>Endopterygota</taxon>
        <taxon>Diptera</taxon>
        <taxon>Brachycera</taxon>
        <taxon>Muscomorpha</taxon>
        <taxon>Ephydroidea</taxon>
        <taxon>Drosophilidae</taxon>
        <taxon>Drosophila</taxon>
        <taxon>Sophophora</taxon>
    </lineage>
</organism>
<gene>
    <name type="primary">Amyrel</name>
    <name type="ORF">CG8221</name>
</gene>
<dbReference type="EC" id="3.2.1.1" evidence="2"/>
<dbReference type="EMBL" id="U69607">
    <property type="protein sequence ID" value="AAD08845.1"/>
    <property type="molecule type" value="Genomic_DNA"/>
</dbReference>
<dbReference type="EMBL" id="AF022713">
    <property type="protein sequence ID" value="AAD09147.2"/>
    <property type="molecule type" value="Genomic_DNA"/>
</dbReference>
<dbReference type="EMBL" id="AE013599">
    <property type="protein sequence ID" value="AAF57971.1"/>
    <property type="molecule type" value="Genomic_DNA"/>
</dbReference>
<dbReference type="EMBL" id="AY052055">
    <property type="protein sequence ID" value="AAK93479.1"/>
    <property type="molecule type" value="mRNA"/>
</dbReference>
<dbReference type="RefSeq" id="NP_477262.1">
    <property type="nucleotide sequence ID" value="NM_057914.4"/>
</dbReference>
<dbReference type="SMR" id="O18408"/>
<dbReference type="BioGRID" id="62575">
    <property type="interactions" value="5"/>
</dbReference>
<dbReference type="FunCoup" id="O18408">
    <property type="interactions" value="107"/>
</dbReference>
<dbReference type="IntAct" id="O18408">
    <property type="interactions" value="6"/>
</dbReference>
<dbReference type="STRING" id="7227.FBpp0086263"/>
<dbReference type="CAZy" id="GH13">
    <property type="family name" value="Glycoside Hydrolase Family 13"/>
</dbReference>
<dbReference type="PaxDb" id="7227-FBpp0086263"/>
<dbReference type="DNASU" id="36863"/>
<dbReference type="EnsemblMetazoa" id="FBtr0087117">
    <property type="protein sequence ID" value="FBpp0086263"/>
    <property type="gene ID" value="FBgn0020506"/>
</dbReference>
<dbReference type="GeneID" id="36863"/>
<dbReference type="KEGG" id="dme:Dmel_CG8221"/>
<dbReference type="UCSC" id="CG8221-RA">
    <property type="organism name" value="d. melanogaster"/>
</dbReference>
<dbReference type="AGR" id="FB:FBgn0020506"/>
<dbReference type="CTD" id="36863"/>
<dbReference type="FlyBase" id="FBgn0020506">
    <property type="gene designation" value="Amyrel"/>
</dbReference>
<dbReference type="VEuPathDB" id="VectorBase:FBgn0020506"/>
<dbReference type="eggNOG" id="KOG2212">
    <property type="taxonomic scope" value="Eukaryota"/>
</dbReference>
<dbReference type="GeneTree" id="ENSGT00940000167534"/>
<dbReference type="HOGENOM" id="CLU_013336_2_1_1"/>
<dbReference type="InParanoid" id="O18408"/>
<dbReference type="OMA" id="WGNRNTI"/>
<dbReference type="OrthoDB" id="550577at2759"/>
<dbReference type="PhylomeDB" id="O18408"/>
<dbReference type="SignaLink" id="O18408"/>
<dbReference type="BioGRID-ORCS" id="36863">
    <property type="hits" value="0 hits in 3 CRISPR screens"/>
</dbReference>
<dbReference type="GenomeRNAi" id="36863"/>
<dbReference type="PRO" id="PR:O18408"/>
<dbReference type="Proteomes" id="UP000000803">
    <property type="component" value="Chromosome 2R"/>
</dbReference>
<dbReference type="Bgee" id="FBgn0020506">
    <property type="expression patterns" value="Expressed in midgut large flat cell (Drosophila) in digestive tract and 7 other cell types or tissues"/>
</dbReference>
<dbReference type="ExpressionAtlas" id="O18408">
    <property type="expression patterns" value="baseline and differential"/>
</dbReference>
<dbReference type="GO" id="GO:0005615">
    <property type="term" value="C:extracellular space"/>
    <property type="evidence" value="ECO:0000318"/>
    <property type="project" value="GO_Central"/>
</dbReference>
<dbReference type="GO" id="GO:0004134">
    <property type="term" value="F:4-alpha-glucanotransferase activity"/>
    <property type="evidence" value="ECO:0000314"/>
    <property type="project" value="FlyBase"/>
</dbReference>
<dbReference type="GO" id="GO:0004556">
    <property type="term" value="F:alpha-amylase activity"/>
    <property type="evidence" value="ECO:0000314"/>
    <property type="project" value="FlyBase"/>
</dbReference>
<dbReference type="GO" id="GO:0016160">
    <property type="term" value="F:amylase activity"/>
    <property type="evidence" value="ECO:0000250"/>
    <property type="project" value="FlyBase"/>
</dbReference>
<dbReference type="GO" id="GO:0046872">
    <property type="term" value="F:metal ion binding"/>
    <property type="evidence" value="ECO:0007669"/>
    <property type="project" value="UniProtKB-KW"/>
</dbReference>
<dbReference type="GO" id="GO:0005975">
    <property type="term" value="P:carbohydrate metabolic process"/>
    <property type="evidence" value="ECO:0000318"/>
    <property type="project" value="GO_Central"/>
</dbReference>
<dbReference type="CDD" id="cd11317">
    <property type="entry name" value="AmyAc_bac_euk_AmyA"/>
    <property type="match status" value="1"/>
</dbReference>
<dbReference type="FunFam" id="3.20.20.80:FF:000119">
    <property type="entry name" value="Alpha-amylase-related protein"/>
    <property type="match status" value="1"/>
</dbReference>
<dbReference type="FunFam" id="2.60.40.1180:FF:000020">
    <property type="entry name" value="Pancreatic alpha-amylase"/>
    <property type="match status" value="1"/>
</dbReference>
<dbReference type="Gene3D" id="3.20.20.80">
    <property type="entry name" value="Glycosidases"/>
    <property type="match status" value="1"/>
</dbReference>
<dbReference type="Gene3D" id="2.60.40.1180">
    <property type="entry name" value="Golgi alpha-mannosidase II"/>
    <property type="match status" value="1"/>
</dbReference>
<dbReference type="InterPro" id="IPR006048">
    <property type="entry name" value="A-amylase/branching_C"/>
</dbReference>
<dbReference type="InterPro" id="IPR031319">
    <property type="entry name" value="A-amylase_C"/>
</dbReference>
<dbReference type="InterPro" id="IPR006046">
    <property type="entry name" value="Alpha_amylase"/>
</dbReference>
<dbReference type="InterPro" id="IPR006047">
    <property type="entry name" value="Glyco_hydro_13_cat_dom"/>
</dbReference>
<dbReference type="InterPro" id="IPR013780">
    <property type="entry name" value="Glyco_hydro_b"/>
</dbReference>
<dbReference type="InterPro" id="IPR017853">
    <property type="entry name" value="Glycoside_hydrolase_SF"/>
</dbReference>
<dbReference type="PANTHER" id="PTHR43447">
    <property type="entry name" value="ALPHA-AMYLASE"/>
    <property type="match status" value="1"/>
</dbReference>
<dbReference type="Pfam" id="PF00128">
    <property type="entry name" value="Alpha-amylase"/>
    <property type="match status" value="1"/>
</dbReference>
<dbReference type="Pfam" id="PF02806">
    <property type="entry name" value="Alpha-amylase_C"/>
    <property type="match status" value="1"/>
</dbReference>
<dbReference type="PRINTS" id="PR00110">
    <property type="entry name" value="ALPHAAMYLASE"/>
</dbReference>
<dbReference type="SMART" id="SM00642">
    <property type="entry name" value="Aamy"/>
    <property type="match status" value="1"/>
</dbReference>
<dbReference type="SMART" id="SM00632">
    <property type="entry name" value="Aamy_C"/>
    <property type="match status" value="1"/>
</dbReference>
<dbReference type="SUPFAM" id="SSF51445">
    <property type="entry name" value="(Trans)glycosidases"/>
    <property type="match status" value="1"/>
</dbReference>
<dbReference type="SUPFAM" id="SSF51011">
    <property type="entry name" value="Glycosyl hydrolase domain"/>
    <property type="match status" value="1"/>
</dbReference>
<feature type="signal peptide" evidence="1">
    <location>
        <begin position="1"/>
        <end position="19"/>
    </location>
</feature>
<feature type="chain" id="PRO_0000001382" description="Alpha-amylase-related protein">
    <location>
        <begin position="20"/>
        <end position="493"/>
    </location>
</feature>
<feature type="active site" description="Nucleophile" evidence="2">
    <location>
        <position position="207"/>
    </location>
</feature>
<feature type="active site" description="Proton donor" evidence="2">
    <location>
        <position position="244"/>
    </location>
</feature>
<feature type="binding site" evidence="3">
    <location>
        <position position="117"/>
    </location>
    <ligand>
        <name>Ca(2+)</name>
        <dbReference type="ChEBI" id="CHEBI:29108"/>
    </ligand>
</feature>
<feature type="binding site" evidence="3">
    <location>
        <position position="168"/>
    </location>
    <ligand>
        <name>Ca(2+)</name>
        <dbReference type="ChEBI" id="CHEBI:29108"/>
    </ligand>
</feature>
<feature type="binding site" evidence="3">
    <location>
        <position position="177"/>
    </location>
    <ligand>
        <name>Ca(2+)</name>
        <dbReference type="ChEBI" id="CHEBI:29108"/>
    </ligand>
</feature>
<feature type="binding site" evidence="3">
    <location>
        <position position="205"/>
    </location>
    <ligand>
        <name>chloride</name>
        <dbReference type="ChEBI" id="CHEBI:17996"/>
    </ligand>
</feature>
<feature type="binding site" evidence="3">
    <location>
        <position position="211"/>
    </location>
    <ligand>
        <name>Ca(2+)</name>
        <dbReference type="ChEBI" id="CHEBI:29108"/>
    </ligand>
</feature>
<feature type="binding site" evidence="3">
    <location>
        <position position="307"/>
    </location>
    <ligand>
        <name>chloride</name>
        <dbReference type="ChEBI" id="CHEBI:17996"/>
    </ligand>
</feature>
<feature type="binding site" evidence="3">
    <location>
        <position position="342"/>
    </location>
    <ligand>
        <name>chloride</name>
        <dbReference type="ChEBI" id="CHEBI:17996"/>
    </ligand>
</feature>
<feature type="site" description="Transition state stabilizer" evidence="2">
    <location>
        <position position="309"/>
    </location>
</feature>
<feature type="modified residue" description="Pyrrolidone carboxylic acid" evidence="1">
    <location>
        <position position="20"/>
    </location>
</feature>
<feature type="disulfide bond" evidence="3">
    <location>
        <begin position="47"/>
        <end position="103"/>
    </location>
</feature>
<feature type="disulfide bond" evidence="3">
    <location>
        <begin position="156"/>
        <end position="170"/>
    </location>
</feature>
<feature type="disulfide bond" evidence="3">
    <location>
        <begin position="375"/>
        <end position="381"/>
    </location>
</feature>
<feature type="disulfide bond" evidence="4">
    <location>
        <begin position="417"/>
        <end position="440"/>
    </location>
</feature>
<feature type="disulfide bond" evidence="3">
    <location>
        <begin position="447"/>
        <end position="459"/>
    </location>
</feature>
<feature type="sequence conflict" description="In Ref. 2; AAD08845 and 3; AAD09147." evidence="5" ref="2 3">
    <original>F</original>
    <variation>S</variation>
    <location>
        <position position="2"/>
    </location>
</feature>
<feature type="sequence conflict" description="In Ref. 2; AAD08845." evidence="5" ref="2">
    <original>T</original>
    <variation>A</variation>
    <location>
        <position position="7"/>
    </location>
</feature>
<feature type="sequence conflict" description="In Ref. 2; AAD08845 and 3; AAD09147." evidence="5" ref="2 3">
    <original>L</original>
    <variation>V</variation>
    <location>
        <position position="18"/>
    </location>
</feature>
<feature type="sequence conflict" description="In Ref. 2; AAD08845 and 3; AAD09147." evidence="5" ref="2 3">
    <original>L</original>
    <variation>I</variation>
    <location>
        <position position="69"/>
    </location>
</feature>
<feature type="sequence conflict" description="In Ref. 2; AAD08845 and 3; AAD09147." evidence="5" ref="2 3">
    <original>A</original>
    <variation>V</variation>
    <location>
        <position position="127"/>
    </location>
</feature>
<feature type="sequence conflict" description="In Ref. 2; AAD08845 and 3; AAD09147." evidence="5" ref="2 3">
    <original>E</original>
    <variation>V</variation>
    <location>
        <position position="157"/>
    </location>
</feature>
<feature type="sequence conflict" description="In Ref. 2; AAD08845." evidence="5" ref="2">
    <original>V</original>
    <variation>D</variation>
    <location>
        <position position="253"/>
    </location>
</feature>
<feature type="sequence conflict" description="In Ref. 2; AAD08845." evidence="5" ref="2">
    <original>I</original>
    <variation>T</variation>
    <location>
        <position position="340"/>
    </location>
</feature>
<feature type="sequence conflict" description="In Ref. 2; AAD08845." evidence="5" ref="2">
    <original>Q</original>
    <variation>R</variation>
    <location>
        <position position="358"/>
    </location>
</feature>
<feature type="sequence conflict" description="In Ref. 2; AAD08845." evidence="5" ref="2">
    <original>VN</original>
    <variation>MS</variation>
    <location>
        <begin position="466"/>
        <end position="467"/>
    </location>
</feature>
<comment type="catalytic activity">
    <reaction evidence="2">
        <text>Endohydrolysis of (1-&gt;4)-alpha-D-glucosidic linkages in polysaccharides containing three or more (1-&gt;4)-alpha-linked D-glucose units.</text>
        <dbReference type="EC" id="3.2.1.1"/>
    </reaction>
</comment>
<comment type="cofactor">
    <cofactor evidence="3">
        <name>Ca(2+)</name>
        <dbReference type="ChEBI" id="CHEBI:29108"/>
    </cofactor>
    <text evidence="3">Binds 1 Ca(2+) ion per subunit.</text>
</comment>
<comment type="cofactor">
    <cofactor evidence="3">
        <name>chloride</name>
        <dbReference type="ChEBI" id="CHEBI:17996"/>
    </cofactor>
    <text evidence="3">Binds 1 Cl(-) ion per subunit.</text>
</comment>
<comment type="subunit">
    <text evidence="1">Monomer.</text>
</comment>
<comment type="subcellular location">
    <subcellularLocation>
        <location evidence="5">Secreted</location>
    </subcellularLocation>
</comment>
<comment type="tissue specificity">
    <text>Midgut and fat body.</text>
</comment>
<comment type="developmental stage">
    <text>Expressed during second and third larval instars, but not in the adult.</text>
</comment>
<comment type="similarity">
    <text evidence="5">Belongs to the glycosyl hydrolase 13 family.</text>
</comment>
<sequence>MFKFALTLTLCLAGSLSLAQHNPHWWGNRNTIVHLFEWKWSDIAQECESFLGPRGFAGVQVSPVNENILSAGRPWWERYQPISYKLTTRSGNEEEFGDMVRRCNDVGVRIYVDVLLNHMSGDFDGVAVGTAGTEAEPSKKSFPGVPYTAQDFHPTCEITDWNDRFQVQQCELVGLKDLDQSSDWVRSKLIEFLDHLIELGVAGFRVDAAKHMASEDLEYIYSSLSNLNIDHGFPHNSRPFIFQEVIDHGHETVSRDEYKDLGAVTEFRFSEEIGNAFRGNNALKWLQSWGTDWGFLPSGQALTFVDNHDNQRDAGAVLNYKSPRQYKMATAFHLAYPYGISRVMSSFAFDDHDTPPPQDAQERIISPEFDADGACVNGWICEHRWRQIYAMVGFKNAVRDTEITGWWDNGDNQISFCRGNKGFLAINNNLYDLSQDLNTCLPAGTYCDVISGSLIDGSCTGKSVTVNENGYGYIHIGSDDFDGVLALHVDAKV</sequence>